<dbReference type="EMBL" id="AM933173">
    <property type="protein sequence ID" value="CAR39781.1"/>
    <property type="molecule type" value="Genomic_DNA"/>
</dbReference>
<dbReference type="RefSeq" id="WP_001096206.1">
    <property type="nucleotide sequence ID" value="NC_011274.1"/>
</dbReference>
<dbReference type="SMR" id="B5RH27"/>
<dbReference type="GeneID" id="93751944"/>
<dbReference type="KEGG" id="seg:SG4011"/>
<dbReference type="HOGENOM" id="CLU_061015_2_1_6"/>
<dbReference type="Proteomes" id="UP000008321">
    <property type="component" value="Chromosome"/>
</dbReference>
<dbReference type="GO" id="GO:1990904">
    <property type="term" value="C:ribonucleoprotein complex"/>
    <property type="evidence" value="ECO:0007669"/>
    <property type="project" value="UniProtKB-KW"/>
</dbReference>
<dbReference type="GO" id="GO:0005840">
    <property type="term" value="C:ribosome"/>
    <property type="evidence" value="ECO:0007669"/>
    <property type="project" value="UniProtKB-KW"/>
</dbReference>
<dbReference type="GO" id="GO:0019843">
    <property type="term" value="F:rRNA binding"/>
    <property type="evidence" value="ECO:0007669"/>
    <property type="project" value="UniProtKB-UniRule"/>
</dbReference>
<dbReference type="GO" id="GO:0003735">
    <property type="term" value="F:structural constituent of ribosome"/>
    <property type="evidence" value="ECO:0007669"/>
    <property type="project" value="InterPro"/>
</dbReference>
<dbReference type="GO" id="GO:0000049">
    <property type="term" value="F:tRNA binding"/>
    <property type="evidence" value="ECO:0007669"/>
    <property type="project" value="UniProtKB-UniRule"/>
</dbReference>
<dbReference type="GO" id="GO:0006412">
    <property type="term" value="P:translation"/>
    <property type="evidence" value="ECO:0007669"/>
    <property type="project" value="UniProtKB-UniRule"/>
</dbReference>
<dbReference type="FunFam" id="3.30.1440.10:FF:000001">
    <property type="entry name" value="50S ribosomal protein L5"/>
    <property type="match status" value="1"/>
</dbReference>
<dbReference type="Gene3D" id="3.30.1440.10">
    <property type="match status" value="1"/>
</dbReference>
<dbReference type="HAMAP" id="MF_01333_B">
    <property type="entry name" value="Ribosomal_uL5_B"/>
    <property type="match status" value="1"/>
</dbReference>
<dbReference type="InterPro" id="IPR002132">
    <property type="entry name" value="Ribosomal_uL5"/>
</dbReference>
<dbReference type="InterPro" id="IPR020930">
    <property type="entry name" value="Ribosomal_uL5_bac-type"/>
</dbReference>
<dbReference type="InterPro" id="IPR031309">
    <property type="entry name" value="Ribosomal_uL5_C"/>
</dbReference>
<dbReference type="InterPro" id="IPR020929">
    <property type="entry name" value="Ribosomal_uL5_CS"/>
</dbReference>
<dbReference type="InterPro" id="IPR022803">
    <property type="entry name" value="Ribosomal_uL5_dom_sf"/>
</dbReference>
<dbReference type="InterPro" id="IPR031310">
    <property type="entry name" value="Ribosomal_uL5_N"/>
</dbReference>
<dbReference type="NCBIfam" id="NF000585">
    <property type="entry name" value="PRK00010.1"/>
    <property type="match status" value="1"/>
</dbReference>
<dbReference type="PANTHER" id="PTHR11994">
    <property type="entry name" value="60S RIBOSOMAL PROTEIN L11-RELATED"/>
    <property type="match status" value="1"/>
</dbReference>
<dbReference type="Pfam" id="PF00281">
    <property type="entry name" value="Ribosomal_L5"/>
    <property type="match status" value="1"/>
</dbReference>
<dbReference type="Pfam" id="PF00673">
    <property type="entry name" value="Ribosomal_L5_C"/>
    <property type="match status" value="1"/>
</dbReference>
<dbReference type="PIRSF" id="PIRSF002161">
    <property type="entry name" value="Ribosomal_L5"/>
    <property type="match status" value="1"/>
</dbReference>
<dbReference type="SUPFAM" id="SSF55282">
    <property type="entry name" value="RL5-like"/>
    <property type="match status" value="1"/>
</dbReference>
<dbReference type="PROSITE" id="PS00358">
    <property type="entry name" value="RIBOSOMAL_L5"/>
    <property type="match status" value="1"/>
</dbReference>
<organism>
    <name type="scientific">Salmonella gallinarum (strain 287/91 / NCTC 13346)</name>
    <dbReference type="NCBI Taxonomy" id="550538"/>
    <lineage>
        <taxon>Bacteria</taxon>
        <taxon>Pseudomonadati</taxon>
        <taxon>Pseudomonadota</taxon>
        <taxon>Gammaproteobacteria</taxon>
        <taxon>Enterobacterales</taxon>
        <taxon>Enterobacteriaceae</taxon>
        <taxon>Salmonella</taxon>
    </lineage>
</organism>
<proteinExistence type="inferred from homology"/>
<sequence>MAKLHDYYKDEVVNKLMTEFNYNSVMQVPRVEKITLNMGVGEAIADKKLLDNAAADLTAISGQKPLITKARKSVAGFKIRQGYPIGCKVTLRGERMWEFFERLITIAVPRIRDFRGLSAKSFDGRGNYSMGVREQIIFPEIDYDKVDRVRGLDITITTTAKSDEEGRALLAAFDFPFRK</sequence>
<evidence type="ECO:0000255" key="1">
    <source>
        <dbReference type="HAMAP-Rule" id="MF_01333"/>
    </source>
</evidence>
<evidence type="ECO:0000305" key="2"/>
<protein>
    <recommendedName>
        <fullName evidence="1">Large ribosomal subunit protein uL5</fullName>
    </recommendedName>
    <alternativeName>
        <fullName evidence="2">50S ribosomal protein L5</fullName>
    </alternativeName>
</protein>
<comment type="function">
    <text evidence="1">This is one of the proteins that bind and probably mediate the attachment of the 5S RNA into the large ribosomal subunit, where it forms part of the central protuberance. In the 70S ribosome it contacts protein S13 of the 30S subunit (bridge B1b), connecting the 2 subunits; this bridge is implicated in subunit movement. Contacts the P site tRNA; the 5S rRNA and some of its associated proteins might help stabilize positioning of ribosome-bound tRNAs.</text>
</comment>
<comment type="subunit">
    <text evidence="1">Part of the 50S ribosomal subunit; part of the 5S rRNA/L5/L18/L25 subcomplex. Contacts the 5S rRNA and the P site tRNA. Forms a bridge to the 30S subunit in the 70S ribosome.</text>
</comment>
<comment type="similarity">
    <text evidence="1">Belongs to the universal ribosomal protein uL5 family.</text>
</comment>
<name>RL5_SALG2</name>
<feature type="chain" id="PRO_1000142445" description="Large ribosomal subunit protein uL5">
    <location>
        <begin position="1"/>
        <end position="179"/>
    </location>
</feature>
<reference key="1">
    <citation type="journal article" date="2008" name="Genome Res.">
        <title>Comparative genome analysis of Salmonella enteritidis PT4 and Salmonella gallinarum 287/91 provides insights into evolutionary and host adaptation pathways.</title>
        <authorList>
            <person name="Thomson N.R."/>
            <person name="Clayton D.J."/>
            <person name="Windhorst D."/>
            <person name="Vernikos G."/>
            <person name="Davidson S."/>
            <person name="Churcher C."/>
            <person name="Quail M.A."/>
            <person name="Stevens M."/>
            <person name="Jones M.A."/>
            <person name="Watson M."/>
            <person name="Barron A."/>
            <person name="Layton A."/>
            <person name="Pickard D."/>
            <person name="Kingsley R.A."/>
            <person name="Bignell A."/>
            <person name="Clark L."/>
            <person name="Harris B."/>
            <person name="Ormond D."/>
            <person name="Abdellah Z."/>
            <person name="Brooks K."/>
            <person name="Cherevach I."/>
            <person name="Chillingworth T."/>
            <person name="Woodward J."/>
            <person name="Norberczak H."/>
            <person name="Lord A."/>
            <person name="Arrowsmith C."/>
            <person name="Jagels K."/>
            <person name="Moule S."/>
            <person name="Mungall K."/>
            <person name="Saunders M."/>
            <person name="Whitehead S."/>
            <person name="Chabalgoity J.A."/>
            <person name="Maskell D."/>
            <person name="Humphreys T."/>
            <person name="Roberts M."/>
            <person name="Barrow P.A."/>
            <person name="Dougan G."/>
            <person name="Parkhill J."/>
        </authorList>
    </citation>
    <scope>NUCLEOTIDE SEQUENCE [LARGE SCALE GENOMIC DNA]</scope>
    <source>
        <strain>287/91 / NCTC 13346</strain>
    </source>
</reference>
<gene>
    <name evidence="1" type="primary">rplE</name>
    <name type="ordered locus">SG4011</name>
</gene>
<keyword id="KW-0687">Ribonucleoprotein</keyword>
<keyword id="KW-0689">Ribosomal protein</keyword>
<keyword id="KW-0694">RNA-binding</keyword>
<keyword id="KW-0699">rRNA-binding</keyword>
<keyword id="KW-0820">tRNA-binding</keyword>
<accession>B5RH27</accession>